<evidence type="ECO:0000250" key="1"/>
<evidence type="ECO:0000255" key="2">
    <source>
        <dbReference type="HAMAP-Rule" id="MF_01057"/>
    </source>
</evidence>
<dbReference type="EC" id="2.1.1.33" evidence="2"/>
<dbReference type="EMBL" id="CP000507">
    <property type="protein sequence ID" value="ABM00693.1"/>
    <property type="molecule type" value="Genomic_DNA"/>
</dbReference>
<dbReference type="RefSeq" id="WP_011760599.1">
    <property type="nucleotide sequence ID" value="NC_008700.1"/>
</dbReference>
<dbReference type="SMR" id="A1S8I6"/>
<dbReference type="STRING" id="326297.Sama_2489"/>
<dbReference type="KEGG" id="saz:Sama_2489"/>
<dbReference type="eggNOG" id="COG0220">
    <property type="taxonomic scope" value="Bacteria"/>
</dbReference>
<dbReference type="HOGENOM" id="CLU_050910_0_1_6"/>
<dbReference type="OrthoDB" id="9802090at2"/>
<dbReference type="UniPathway" id="UPA00989"/>
<dbReference type="Proteomes" id="UP000009175">
    <property type="component" value="Chromosome"/>
</dbReference>
<dbReference type="GO" id="GO:0043527">
    <property type="term" value="C:tRNA methyltransferase complex"/>
    <property type="evidence" value="ECO:0007669"/>
    <property type="project" value="TreeGrafter"/>
</dbReference>
<dbReference type="GO" id="GO:0008176">
    <property type="term" value="F:tRNA (guanine(46)-N7)-methyltransferase activity"/>
    <property type="evidence" value="ECO:0007669"/>
    <property type="project" value="UniProtKB-UniRule"/>
</dbReference>
<dbReference type="CDD" id="cd02440">
    <property type="entry name" value="AdoMet_MTases"/>
    <property type="match status" value="1"/>
</dbReference>
<dbReference type="FunFam" id="3.40.50.150:FF:000024">
    <property type="entry name" value="tRNA (guanine-N(7)-)-methyltransferase"/>
    <property type="match status" value="1"/>
</dbReference>
<dbReference type="Gene3D" id="3.40.50.150">
    <property type="entry name" value="Vaccinia Virus protein VP39"/>
    <property type="match status" value="1"/>
</dbReference>
<dbReference type="HAMAP" id="MF_01057">
    <property type="entry name" value="tRNA_methyltr_TrmB"/>
    <property type="match status" value="1"/>
</dbReference>
<dbReference type="InterPro" id="IPR029063">
    <property type="entry name" value="SAM-dependent_MTases_sf"/>
</dbReference>
<dbReference type="InterPro" id="IPR003358">
    <property type="entry name" value="tRNA_(Gua-N-7)_MeTrfase_Trmb"/>
</dbReference>
<dbReference type="InterPro" id="IPR055361">
    <property type="entry name" value="tRNA_methyltr_TrmB_bact"/>
</dbReference>
<dbReference type="NCBIfam" id="TIGR00091">
    <property type="entry name" value="tRNA (guanosine(46)-N7)-methyltransferase TrmB"/>
    <property type="match status" value="1"/>
</dbReference>
<dbReference type="PANTHER" id="PTHR23417">
    <property type="entry name" value="3-DEOXY-D-MANNO-OCTULOSONIC-ACID TRANSFERASE/TRNA GUANINE-N 7 - -METHYLTRANSFERASE"/>
    <property type="match status" value="1"/>
</dbReference>
<dbReference type="PANTHER" id="PTHR23417:SF14">
    <property type="entry name" value="PENTACOTRIPEPTIDE-REPEAT REGION OF PRORP DOMAIN-CONTAINING PROTEIN"/>
    <property type="match status" value="1"/>
</dbReference>
<dbReference type="Pfam" id="PF02390">
    <property type="entry name" value="Methyltransf_4"/>
    <property type="match status" value="1"/>
</dbReference>
<dbReference type="SUPFAM" id="SSF53335">
    <property type="entry name" value="S-adenosyl-L-methionine-dependent methyltransferases"/>
    <property type="match status" value="1"/>
</dbReference>
<dbReference type="PROSITE" id="PS51625">
    <property type="entry name" value="SAM_MT_TRMB"/>
    <property type="match status" value="1"/>
</dbReference>
<keyword id="KW-0489">Methyltransferase</keyword>
<keyword id="KW-1185">Reference proteome</keyword>
<keyword id="KW-0949">S-adenosyl-L-methionine</keyword>
<keyword id="KW-0808">Transferase</keyword>
<keyword id="KW-0819">tRNA processing</keyword>
<accession>A1S8I6</accession>
<comment type="function">
    <text evidence="2">Catalyzes the formation of N(7)-methylguanine at position 46 (m7G46) in tRNA.</text>
</comment>
<comment type="catalytic activity">
    <reaction evidence="2">
        <text>guanosine(46) in tRNA + S-adenosyl-L-methionine = N(7)-methylguanosine(46) in tRNA + S-adenosyl-L-homocysteine</text>
        <dbReference type="Rhea" id="RHEA:42708"/>
        <dbReference type="Rhea" id="RHEA-COMP:10188"/>
        <dbReference type="Rhea" id="RHEA-COMP:10189"/>
        <dbReference type="ChEBI" id="CHEBI:57856"/>
        <dbReference type="ChEBI" id="CHEBI:59789"/>
        <dbReference type="ChEBI" id="CHEBI:74269"/>
        <dbReference type="ChEBI" id="CHEBI:74480"/>
        <dbReference type="EC" id="2.1.1.33"/>
    </reaction>
</comment>
<comment type="pathway">
    <text evidence="2">tRNA modification; N(7)-methylguanine-tRNA biosynthesis.</text>
</comment>
<comment type="similarity">
    <text evidence="2">Belongs to the class I-like SAM-binding methyltransferase superfamily. TrmB family.</text>
</comment>
<gene>
    <name evidence="2" type="primary">trmB</name>
    <name type="ordered locus">Sama_2489</name>
</gene>
<organism>
    <name type="scientific">Shewanella amazonensis (strain ATCC BAA-1098 / SB2B)</name>
    <dbReference type="NCBI Taxonomy" id="326297"/>
    <lineage>
        <taxon>Bacteria</taxon>
        <taxon>Pseudomonadati</taxon>
        <taxon>Pseudomonadota</taxon>
        <taxon>Gammaproteobacteria</taxon>
        <taxon>Alteromonadales</taxon>
        <taxon>Shewanellaceae</taxon>
        <taxon>Shewanella</taxon>
    </lineage>
</organism>
<name>TRMB_SHEAM</name>
<protein>
    <recommendedName>
        <fullName evidence="2">tRNA (guanine-N(7)-)-methyltransferase</fullName>
        <ecNumber evidence="2">2.1.1.33</ecNumber>
    </recommendedName>
    <alternativeName>
        <fullName evidence="2">tRNA (guanine(46)-N(7))-methyltransferase</fullName>
    </alternativeName>
    <alternativeName>
        <fullName evidence="2">tRNA(m7G46)-methyltransferase</fullName>
    </alternativeName>
</protein>
<proteinExistence type="inferred from homology"/>
<reference key="1">
    <citation type="submission" date="2006-12" db="EMBL/GenBank/DDBJ databases">
        <title>Complete sequence of Shewanella amazonensis SB2B.</title>
        <authorList>
            <consortium name="US DOE Joint Genome Institute"/>
            <person name="Copeland A."/>
            <person name="Lucas S."/>
            <person name="Lapidus A."/>
            <person name="Barry K."/>
            <person name="Detter J.C."/>
            <person name="Glavina del Rio T."/>
            <person name="Hammon N."/>
            <person name="Israni S."/>
            <person name="Dalin E."/>
            <person name="Tice H."/>
            <person name="Pitluck S."/>
            <person name="Munk A.C."/>
            <person name="Brettin T."/>
            <person name="Bruce D."/>
            <person name="Han C."/>
            <person name="Tapia R."/>
            <person name="Gilna P."/>
            <person name="Schmutz J."/>
            <person name="Larimer F."/>
            <person name="Land M."/>
            <person name="Hauser L."/>
            <person name="Kyrpides N."/>
            <person name="Mikhailova N."/>
            <person name="Fredrickson J."/>
            <person name="Richardson P."/>
        </authorList>
    </citation>
    <scope>NUCLEOTIDE SEQUENCE [LARGE SCALE GENOMIC DNA]</scope>
    <source>
        <strain>ATCC BAA-1098 / SB2B</strain>
    </source>
</reference>
<sequence>MSEVTTAEFNEDGVYLRKVRSFVLREGRLTTGQAKALESFWPTMGLDYSPQAINFTEVFGREADTVLEIGFGMGASLVEMAANAPELNFIGVEVHKPGVGACLGEAGNAGISNLRVYHHDAVEVLENAIPDSSLARVQLFFPDPWHKKRHHKRRIVQPEFVELLRRKLKIGGVFHMATDWENYAEHMLEVMSAAPGYQNQSDTQTYVPRPDHRPLTKFENRGQRLGHGVWDLMFERVE</sequence>
<feature type="chain" id="PRO_0000288221" description="tRNA (guanine-N(7)-)-methyltransferase">
    <location>
        <begin position="1"/>
        <end position="238"/>
    </location>
</feature>
<feature type="active site" evidence="1">
    <location>
        <position position="143"/>
    </location>
</feature>
<feature type="binding site" evidence="2">
    <location>
        <position position="68"/>
    </location>
    <ligand>
        <name>S-adenosyl-L-methionine</name>
        <dbReference type="ChEBI" id="CHEBI:59789"/>
    </ligand>
</feature>
<feature type="binding site" evidence="2">
    <location>
        <position position="93"/>
    </location>
    <ligand>
        <name>S-adenosyl-L-methionine</name>
        <dbReference type="ChEBI" id="CHEBI:59789"/>
    </ligand>
</feature>
<feature type="binding site" evidence="2">
    <location>
        <position position="120"/>
    </location>
    <ligand>
        <name>S-adenosyl-L-methionine</name>
        <dbReference type="ChEBI" id="CHEBI:59789"/>
    </ligand>
</feature>
<feature type="binding site" evidence="2">
    <location>
        <position position="143"/>
    </location>
    <ligand>
        <name>S-adenosyl-L-methionine</name>
        <dbReference type="ChEBI" id="CHEBI:59789"/>
    </ligand>
</feature>
<feature type="binding site" evidence="2">
    <location>
        <position position="147"/>
    </location>
    <ligand>
        <name>substrate</name>
    </ligand>
</feature>
<feature type="binding site" evidence="2">
    <location>
        <position position="179"/>
    </location>
    <ligand>
        <name>substrate</name>
    </ligand>
</feature>
<feature type="binding site" evidence="2">
    <location>
        <begin position="216"/>
        <end position="219"/>
    </location>
    <ligand>
        <name>substrate</name>
    </ligand>
</feature>